<name>GSA_IGNH4</name>
<reference key="1">
    <citation type="journal article" date="2008" name="Genome Biol.">
        <title>A genomic analysis of the archaeal system Ignicoccus hospitalis-Nanoarchaeum equitans.</title>
        <authorList>
            <person name="Podar M."/>
            <person name="Anderson I."/>
            <person name="Makarova K.S."/>
            <person name="Elkins J.G."/>
            <person name="Ivanova N."/>
            <person name="Wall M.A."/>
            <person name="Lykidis A."/>
            <person name="Mavromatis K."/>
            <person name="Sun H."/>
            <person name="Hudson M.E."/>
            <person name="Chen W."/>
            <person name="Deciu C."/>
            <person name="Hutchison D."/>
            <person name="Eads J.R."/>
            <person name="Anderson A."/>
            <person name="Fernandes F."/>
            <person name="Szeto E."/>
            <person name="Lapidus A."/>
            <person name="Kyrpides N.C."/>
            <person name="Saier M.H. Jr."/>
            <person name="Richardson P.M."/>
            <person name="Rachel R."/>
            <person name="Huber H."/>
            <person name="Eisen J.A."/>
            <person name="Koonin E.V."/>
            <person name="Keller M."/>
            <person name="Stetter K.O."/>
        </authorList>
    </citation>
    <scope>NUCLEOTIDE SEQUENCE [LARGE SCALE GENOMIC DNA]</scope>
    <source>
        <strain>KIN4/I / DSM 18386 / JCM 14125</strain>
    </source>
</reference>
<organism>
    <name type="scientific">Ignicoccus hospitalis (strain KIN4/I / DSM 18386 / JCM 14125)</name>
    <dbReference type="NCBI Taxonomy" id="453591"/>
    <lineage>
        <taxon>Archaea</taxon>
        <taxon>Thermoproteota</taxon>
        <taxon>Thermoprotei</taxon>
        <taxon>Desulfurococcales</taxon>
        <taxon>Desulfurococcaceae</taxon>
        <taxon>Ignicoccus</taxon>
    </lineage>
</organism>
<dbReference type="EC" id="5.4.3.8" evidence="1"/>
<dbReference type="EMBL" id="CP000816">
    <property type="protein sequence ID" value="ABU81865.1"/>
    <property type="molecule type" value="Genomic_DNA"/>
</dbReference>
<dbReference type="RefSeq" id="WP_011998717.1">
    <property type="nucleotide sequence ID" value="NC_009776.1"/>
</dbReference>
<dbReference type="SMR" id="A8AAB3"/>
<dbReference type="STRING" id="453591.Igni_0683"/>
<dbReference type="GeneID" id="5561840"/>
<dbReference type="KEGG" id="iho:Igni_0683"/>
<dbReference type="eggNOG" id="arCOG00918">
    <property type="taxonomic scope" value="Archaea"/>
</dbReference>
<dbReference type="HOGENOM" id="CLU_016922_1_5_2"/>
<dbReference type="OrthoDB" id="6524at2157"/>
<dbReference type="PhylomeDB" id="A8AAB3"/>
<dbReference type="UniPathway" id="UPA00251">
    <property type="reaction ID" value="UER00317"/>
</dbReference>
<dbReference type="Proteomes" id="UP000000262">
    <property type="component" value="Chromosome"/>
</dbReference>
<dbReference type="GO" id="GO:0005737">
    <property type="term" value="C:cytoplasm"/>
    <property type="evidence" value="ECO:0007669"/>
    <property type="project" value="UniProtKB-SubCell"/>
</dbReference>
<dbReference type="GO" id="GO:0042286">
    <property type="term" value="F:glutamate-1-semialdehyde 2,1-aminomutase activity"/>
    <property type="evidence" value="ECO:0007669"/>
    <property type="project" value="UniProtKB-UniRule"/>
</dbReference>
<dbReference type="GO" id="GO:0030170">
    <property type="term" value="F:pyridoxal phosphate binding"/>
    <property type="evidence" value="ECO:0007669"/>
    <property type="project" value="InterPro"/>
</dbReference>
<dbReference type="GO" id="GO:0008483">
    <property type="term" value="F:transaminase activity"/>
    <property type="evidence" value="ECO:0007669"/>
    <property type="project" value="InterPro"/>
</dbReference>
<dbReference type="GO" id="GO:0006782">
    <property type="term" value="P:protoporphyrinogen IX biosynthetic process"/>
    <property type="evidence" value="ECO:0007669"/>
    <property type="project" value="UniProtKB-UniRule"/>
</dbReference>
<dbReference type="CDD" id="cd00610">
    <property type="entry name" value="OAT_like"/>
    <property type="match status" value="1"/>
</dbReference>
<dbReference type="FunFam" id="3.40.640.10:FF:000021">
    <property type="entry name" value="Glutamate-1-semialdehyde 2,1-aminomutase"/>
    <property type="match status" value="1"/>
</dbReference>
<dbReference type="Gene3D" id="3.90.1150.10">
    <property type="entry name" value="Aspartate Aminotransferase, domain 1"/>
    <property type="match status" value="1"/>
</dbReference>
<dbReference type="Gene3D" id="3.40.640.10">
    <property type="entry name" value="Type I PLP-dependent aspartate aminotransferase-like (Major domain)"/>
    <property type="match status" value="1"/>
</dbReference>
<dbReference type="HAMAP" id="MF_00375">
    <property type="entry name" value="HemL_aminotrans_3"/>
    <property type="match status" value="1"/>
</dbReference>
<dbReference type="InterPro" id="IPR004639">
    <property type="entry name" value="4pyrrol_synth_GluAld_NH2Trfase"/>
</dbReference>
<dbReference type="InterPro" id="IPR005814">
    <property type="entry name" value="Aminotrans_3"/>
</dbReference>
<dbReference type="InterPro" id="IPR049704">
    <property type="entry name" value="Aminotrans_3_PPA_site"/>
</dbReference>
<dbReference type="InterPro" id="IPR015424">
    <property type="entry name" value="PyrdxlP-dep_Trfase"/>
</dbReference>
<dbReference type="InterPro" id="IPR015421">
    <property type="entry name" value="PyrdxlP-dep_Trfase_major"/>
</dbReference>
<dbReference type="InterPro" id="IPR015422">
    <property type="entry name" value="PyrdxlP-dep_Trfase_small"/>
</dbReference>
<dbReference type="NCBIfam" id="TIGR00713">
    <property type="entry name" value="hemL"/>
    <property type="match status" value="1"/>
</dbReference>
<dbReference type="NCBIfam" id="NF000818">
    <property type="entry name" value="PRK00062.1"/>
    <property type="match status" value="1"/>
</dbReference>
<dbReference type="PANTHER" id="PTHR43713">
    <property type="entry name" value="GLUTAMATE-1-SEMIALDEHYDE 2,1-AMINOMUTASE"/>
    <property type="match status" value="1"/>
</dbReference>
<dbReference type="PANTHER" id="PTHR43713:SF3">
    <property type="entry name" value="GLUTAMATE-1-SEMIALDEHYDE 2,1-AMINOMUTASE 1, CHLOROPLASTIC-RELATED"/>
    <property type="match status" value="1"/>
</dbReference>
<dbReference type="Pfam" id="PF00202">
    <property type="entry name" value="Aminotran_3"/>
    <property type="match status" value="1"/>
</dbReference>
<dbReference type="SUPFAM" id="SSF53383">
    <property type="entry name" value="PLP-dependent transferases"/>
    <property type="match status" value="1"/>
</dbReference>
<dbReference type="PROSITE" id="PS00600">
    <property type="entry name" value="AA_TRANSFER_CLASS_3"/>
    <property type="match status" value="1"/>
</dbReference>
<proteinExistence type="inferred from homology"/>
<protein>
    <recommendedName>
        <fullName evidence="1">Glutamate-1-semialdehyde 2,1-aminomutase</fullName>
        <shortName evidence="1">GSA</shortName>
        <ecNumber evidence="1">5.4.3.8</ecNumber>
    </recommendedName>
    <alternativeName>
        <fullName evidence="1">Glutamate-1-semialdehyde aminotransferase</fullName>
        <shortName evidence="1">GSA-AT</shortName>
    </alternativeName>
</protein>
<accession>A8AAB3</accession>
<feature type="chain" id="PRO_0000382395" description="Glutamate-1-semialdehyde 2,1-aminomutase">
    <location>
        <begin position="1"/>
        <end position="423"/>
    </location>
</feature>
<feature type="modified residue" description="N6-(pyridoxal phosphate)lysine" evidence="1">
    <location>
        <position position="263"/>
    </location>
</feature>
<sequence>MDRSLELFQIAKNLFPGGVNSPIRAAVKPYPFYVKKASGATLVTVDGVELIDYVLGYGPLILGHMHPKVLEAVEEQLNRGWLYGTPHELEIELAKKIVSHYPSIDMVRFVNSGTEATMTAIRLARGFTKKNKIIKFDGCYHGAHDSVLVKAGSAVSHFGVPGSAGVPEEVSKLTLVVPFNDVEAVEKVAKENQDDLAAIIVEPVMGNAGVIPPKEGFLKELRRIADETGALLIFDEVITGYRLGLGGAQAKFGVVPDLTTLGKIVGGGFPVGVVGGKREIMEYLTPSGPVFNAGTFNAHPVTMAAGLATINELERGYVYEVANSAAEKVAKALEQEAVAKFGGVVHRVASMFQWFPGVEEVNNYADALKANKEISLRLHEELLKRGVFIAPSLFEAWFTSAAHGEDVVNKTLEALSEALKVIS</sequence>
<comment type="catalytic activity">
    <reaction evidence="1">
        <text>(S)-4-amino-5-oxopentanoate = 5-aminolevulinate</text>
        <dbReference type="Rhea" id="RHEA:14265"/>
        <dbReference type="ChEBI" id="CHEBI:57501"/>
        <dbReference type="ChEBI" id="CHEBI:356416"/>
        <dbReference type="EC" id="5.4.3.8"/>
    </reaction>
</comment>
<comment type="cofactor">
    <cofactor evidence="1">
        <name>pyridoxal 5'-phosphate</name>
        <dbReference type="ChEBI" id="CHEBI:597326"/>
    </cofactor>
</comment>
<comment type="pathway">
    <text evidence="1">Porphyrin-containing compound metabolism; protoporphyrin-IX biosynthesis; 5-aminolevulinate from L-glutamyl-tRNA(Glu): step 2/2.</text>
</comment>
<comment type="subcellular location">
    <subcellularLocation>
        <location evidence="1">Cytoplasm</location>
    </subcellularLocation>
</comment>
<comment type="similarity">
    <text evidence="1">Belongs to the class-III pyridoxal-phosphate-dependent aminotransferase family. HemL subfamily.</text>
</comment>
<evidence type="ECO:0000255" key="1">
    <source>
        <dbReference type="HAMAP-Rule" id="MF_00375"/>
    </source>
</evidence>
<keyword id="KW-0963">Cytoplasm</keyword>
<keyword id="KW-0413">Isomerase</keyword>
<keyword id="KW-0627">Porphyrin biosynthesis</keyword>
<keyword id="KW-0663">Pyridoxal phosphate</keyword>
<keyword id="KW-1185">Reference proteome</keyword>
<gene>
    <name evidence="1" type="primary">hemL</name>
    <name type="ordered locus">Igni_0683</name>
</gene>